<feature type="chain" id="PRO_1000085670" description="Cyclic pyranopterin monophosphate synthase">
    <location>
        <begin position="1"/>
        <end position="156"/>
    </location>
</feature>
<feature type="active site" evidence="1">
    <location>
        <position position="126"/>
    </location>
</feature>
<feature type="binding site" evidence="1">
    <location>
        <begin position="75"/>
        <end position="77"/>
    </location>
    <ligand>
        <name>substrate</name>
    </ligand>
</feature>
<feature type="binding site" evidence="1">
    <location>
        <begin position="111"/>
        <end position="112"/>
    </location>
    <ligand>
        <name>substrate</name>
    </ligand>
</feature>
<evidence type="ECO:0000255" key="1">
    <source>
        <dbReference type="HAMAP-Rule" id="MF_01224"/>
    </source>
</evidence>
<sequence>MTRLTHIDDQGRARMVDVSDKAETVREAIAVGFVRMTPETLALAITGAGRKGDVRAVAEIAGVMAAKKTADLIPLCHPLALSKVEVSVEVAEGGLAVMARVKLKGQTGVEMEALTAVSVACLTIYDMLKAAEKGMVIETVRLVEKTGGKSGAWRAE</sequence>
<gene>
    <name evidence="1" type="primary">moaC</name>
    <name type="ordered locus">Caul_0060</name>
</gene>
<comment type="function">
    <text evidence="1">Catalyzes the conversion of (8S)-3',8-cyclo-7,8-dihydroguanosine 5'-triphosphate to cyclic pyranopterin monophosphate (cPMP).</text>
</comment>
<comment type="catalytic activity">
    <reaction evidence="1">
        <text>(8S)-3',8-cyclo-7,8-dihydroguanosine 5'-triphosphate = cyclic pyranopterin phosphate + diphosphate</text>
        <dbReference type="Rhea" id="RHEA:49580"/>
        <dbReference type="ChEBI" id="CHEBI:33019"/>
        <dbReference type="ChEBI" id="CHEBI:59648"/>
        <dbReference type="ChEBI" id="CHEBI:131766"/>
        <dbReference type="EC" id="4.6.1.17"/>
    </reaction>
</comment>
<comment type="pathway">
    <text evidence="1">Cofactor biosynthesis; molybdopterin biosynthesis.</text>
</comment>
<comment type="subunit">
    <text evidence="1">Homohexamer; trimer of dimers.</text>
</comment>
<comment type="similarity">
    <text evidence="1">Belongs to the MoaC family.</text>
</comment>
<keyword id="KW-0456">Lyase</keyword>
<keyword id="KW-0501">Molybdenum cofactor biosynthesis</keyword>
<name>MOAC_CAUSK</name>
<organism>
    <name type="scientific">Caulobacter sp. (strain K31)</name>
    <dbReference type="NCBI Taxonomy" id="366602"/>
    <lineage>
        <taxon>Bacteria</taxon>
        <taxon>Pseudomonadati</taxon>
        <taxon>Pseudomonadota</taxon>
        <taxon>Alphaproteobacteria</taxon>
        <taxon>Caulobacterales</taxon>
        <taxon>Caulobacteraceae</taxon>
        <taxon>Caulobacter</taxon>
    </lineage>
</organism>
<protein>
    <recommendedName>
        <fullName evidence="1">Cyclic pyranopterin monophosphate synthase</fullName>
        <ecNumber evidence="1">4.6.1.17</ecNumber>
    </recommendedName>
    <alternativeName>
        <fullName evidence="1">Molybdenum cofactor biosynthesis protein C</fullName>
    </alternativeName>
</protein>
<proteinExistence type="inferred from homology"/>
<accession>B0T229</accession>
<dbReference type="EC" id="4.6.1.17" evidence="1"/>
<dbReference type="EMBL" id="CP000927">
    <property type="protein sequence ID" value="ABZ69198.1"/>
    <property type="molecule type" value="Genomic_DNA"/>
</dbReference>
<dbReference type="SMR" id="B0T229"/>
<dbReference type="STRING" id="366602.Caul_0060"/>
<dbReference type="KEGG" id="cak:Caul_0060"/>
<dbReference type="eggNOG" id="COG0315">
    <property type="taxonomic scope" value="Bacteria"/>
</dbReference>
<dbReference type="HOGENOM" id="CLU_074693_1_1_5"/>
<dbReference type="OrthoDB" id="9794429at2"/>
<dbReference type="UniPathway" id="UPA00344"/>
<dbReference type="GO" id="GO:0061799">
    <property type="term" value="F:cyclic pyranopterin monophosphate synthase activity"/>
    <property type="evidence" value="ECO:0007669"/>
    <property type="project" value="UniProtKB-UniRule"/>
</dbReference>
<dbReference type="GO" id="GO:0006777">
    <property type="term" value="P:Mo-molybdopterin cofactor biosynthetic process"/>
    <property type="evidence" value="ECO:0007669"/>
    <property type="project" value="UniProtKB-UniRule"/>
</dbReference>
<dbReference type="CDD" id="cd01420">
    <property type="entry name" value="MoaC_PE"/>
    <property type="match status" value="1"/>
</dbReference>
<dbReference type="Gene3D" id="3.30.70.640">
    <property type="entry name" value="Molybdopterin cofactor biosynthesis C (MoaC) domain"/>
    <property type="match status" value="1"/>
</dbReference>
<dbReference type="HAMAP" id="MF_01224_B">
    <property type="entry name" value="MoaC_B"/>
    <property type="match status" value="1"/>
</dbReference>
<dbReference type="InterPro" id="IPR023045">
    <property type="entry name" value="MoaC"/>
</dbReference>
<dbReference type="InterPro" id="IPR047594">
    <property type="entry name" value="MoaC_bact/euk"/>
</dbReference>
<dbReference type="InterPro" id="IPR036522">
    <property type="entry name" value="MoaC_sf"/>
</dbReference>
<dbReference type="InterPro" id="IPR050105">
    <property type="entry name" value="MoCo_biosynth_MoaA/MoaC"/>
</dbReference>
<dbReference type="InterPro" id="IPR002820">
    <property type="entry name" value="Mopterin_CF_biosynth-C_dom"/>
</dbReference>
<dbReference type="NCBIfam" id="TIGR00581">
    <property type="entry name" value="moaC"/>
    <property type="match status" value="1"/>
</dbReference>
<dbReference type="NCBIfam" id="NF006870">
    <property type="entry name" value="PRK09364.1"/>
    <property type="match status" value="1"/>
</dbReference>
<dbReference type="PANTHER" id="PTHR22960:SF29">
    <property type="entry name" value="CYCLIC PYRANOPTERIN MONOPHOSPHATE SYNTHASE"/>
    <property type="match status" value="1"/>
</dbReference>
<dbReference type="PANTHER" id="PTHR22960">
    <property type="entry name" value="MOLYBDOPTERIN COFACTOR SYNTHESIS PROTEIN A"/>
    <property type="match status" value="1"/>
</dbReference>
<dbReference type="Pfam" id="PF01967">
    <property type="entry name" value="MoaC"/>
    <property type="match status" value="1"/>
</dbReference>
<dbReference type="SUPFAM" id="SSF55040">
    <property type="entry name" value="Molybdenum cofactor biosynthesis protein C, MoaC"/>
    <property type="match status" value="1"/>
</dbReference>
<reference key="1">
    <citation type="submission" date="2008-01" db="EMBL/GenBank/DDBJ databases">
        <title>Complete sequence of chromosome of Caulobacter sp. K31.</title>
        <authorList>
            <consortium name="US DOE Joint Genome Institute"/>
            <person name="Copeland A."/>
            <person name="Lucas S."/>
            <person name="Lapidus A."/>
            <person name="Barry K."/>
            <person name="Glavina del Rio T."/>
            <person name="Dalin E."/>
            <person name="Tice H."/>
            <person name="Pitluck S."/>
            <person name="Bruce D."/>
            <person name="Goodwin L."/>
            <person name="Thompson L.S."/>
            <person name="Brettin T."/>
            <person name="Detter J.C."/>
            <person name="Han C."/>
            <person name="Schmutz J."/>
            <person name="Larimer F."/>
            <person name="Land M."/>
            <person name="Hauser L."/>
            <person name="Kyrpides N."/>
            <person name="Kim E."/>
            <person name="Stephens C."/>
            <person name="Richardson P."/>
        </authorList>
    </citation>
    <scope>NUCLEOTIDE SEQUENCE [LARGE SCALE GENOMIC DNA]</scope>
    <source>
        <strain>K31</strain>
    </source>
</reference>